<proteinExistence type="inferred from homology"/>
<comment type="similarity">
    <text evidence="1">Belongs to the UPF0229 family.</text>
</comment>
<gene>
    <name type="ordered locus">YPTB2079</name>
</gene>
<name>Y2079_YERPS</name>
<sequence>MGYFIDRRLNGKNKSMVNRQRFLRRYKSQIKQSIADAINKRSVTDIESGESVSIPIDDINEPMFHQGNGGLRHRVHPGNDHFITNDRVDRPQGGGGGGSGQGNAGKDGEGEDEFVFQISKDEYLDLLFEDLALPNLKRNQYKQLAEFKTHRAGYTSNGVPANISVVRSLQNSLARRTAMTASKRRELRELEAALTVLENSEPAQLLEEERLRKAITELKQKIARVPFIDTFDLRYKNYERRPEPSSQAVMFCLMDVSGSMDQATKDMAKRFYILLYLFLSRTYKNVDVVYIRHHTQAKEVDEQEFFYSQETGGTIVSSALKLMDEVVQERYNPAQWNIYAAQASDGDNWADDSPLCHELLAKKILPVVRYYSYIEITRRAHQTLWREYEDLEEKFDNFAIQHIREPEDIYPVFRELFHKQTVDN</sequence>
<organism>
    <name type="scientific">Yersinia pseudotuberculosis serotype I (strain IP32953)</name>
    <dbReference type="NCBI Taxonomy" id="273123"/>
    <lineage>
        <taxon>Bacteria</taxon>
        <taxon>Pseudomonadati</taxon>
        <taxon>Pseudomonadota</taxon>
        <taxon>Gammaproteobacteria</taxon>
        <taxon>Enterobacterales</taxon>
        <taxon>Yersiniaceae</taxon>
        <taxon>Yersinia</taxon>
    </lineage>
</organism>
<feature type="chain" id="PRO_1000066891" description="UPF0229 protein YPTB2079">
    <location>
        <begin position="1"/>
        <end position="424"/>
    </location>
</feature>
<feature type="region of interest" description="Disordered" evidence="2">
    <location>
        <begin position="84"/>
        <end position="109"/>
    </location>
</feature>
<feature type="compositionally biased region" description="Gly residues" evidence="2">
    <location>
        <begin position="92"/>
        <end position="105"/>
    </location>
</feature>
<reference key="1">
    <citation type="journal article" date="2004" name="Proc. Natl. Acad. Sci. U.S.A.">
        <title>Insights into the evolution of Yersinia pestis through whole-genome comparison with Yersinia pseudotuberculosis.</title>
        <authorList>
            <person name="Chain P.S.G."/>
            <person name="Carniel E."/>
            <person name="Larimer F.W."/>
            <person name="Lamerdin J."/>
            <person name="Stoutland P.O."/>
            <person name="Regala W.M."/>
            <person name="Georgescu A.M."/>
            <person name="Vergez L.M."/>
            <person name="Land M.L."/>
            <person name="Motin V.L."/>
            <person name="Brubaker R.R."/>
            <person name="Fowler J."/>
            <person name="Hinnebusch J."/>
            <person name="Marceau M."/>
            <person name="Medigue C."/>
            <person name="Simonet M."/>
            <person name="Chenal-Francisque V."/>
            <person name="Souza B."/>
            <person name="Dacheux D."/>
            <person name="Elliott J.M."/>
            <person name="Derbise A."/>
            <person name="Hauser L.J."/>
            <person name="Garcia E."/>
        </authorList>
    </citation>
    <scope>NUCLEOTIDE SEQUENCE [LARGE SCALE GENOMIC DNA]</scope>
    <source>
        <strain>IP32953</strain>
    </source>
</reference>
<accession>Q66AQ1</accession>
<evidence type="ECO:0000255" key="1">
    <source>
        <dbReference type="HAMAP-Rule" id="MF_01232"/>
    </source>
</evidence>
<evidence type="ECO:0000256" key="2">
    <source>
        <dbReference type="SAM" id="MobiDB-lite"/>
    </source>
</evidence>
<protein>
    <recommendedName>
        <fullName evidence="1">UPF0229 protein YPTB2079</fullName>
    </recommendedName>
</protein>
<dbReference type="EMBL" id="BX936398">
    <property type="protein sequence ID" value="CAH21317.1"/>
    <property type="molecule type" value="Genomic_DNA"/>
</dbReference>
<dbReference type="RefSeq" id="WP_002216501.1">
    <property type="nucleotide sequence ID" value="NZ_CP009712.1"/>
</dbReference>
<dbReference type="SMR" id="Q66AQ1"/>
<dbReference type="KEGG" id="ypo:BZ17_385"/>
<dbReference type="KEGG" id="yps:YPTB2079"/>
<dbReference type="PATRIC" id="fig|273123.14.peg.412"/>
<dbReference type="Proteomes" id="UP000001011">
    <property type="component" value="Chromosome"/>
</dbReference>
<dbReference type="HAMAP" id="MF_01232">
    <property type="entry name" value="UPF0229"/>
    <property type="match status" value="1"/>
</dbReference>
<dbReference type="InterPro" id="IPR006698">
    <property type="entry name" value="UPF0229"/>
</dbReference>
<dbReference type="NCBIfam" id="NF003707">
    <property type="entry name" value="PRK05325.1-2"/>
    <property type="match status" value="1"/>
</dbReference>
<dbReference type="NCBIfam" id="NF003708">
    <property type="entry name" value="PRK05325.1-3"/>
    <property type="match status" value="1"/>
</dbReference>
<dbReference type="PANTHER" id="PTHR30510">
    <property type="entry name" value="UPF0229 PROTEIN YEAH"/>
    <property type="match status" value="1"/>
</dbReference>
<dbReference type="PANTHER" id="PTHR30510:SF2">
    <property type="entry name" value="UPF0229 PROTEIN YEAH"/>
    <property type="match status" value="1"/>
</dbReference>
<dbReference type="Pfam" id="PF04285">
    <property type="entry name" value="DUF444"/>
    <property type="match status" value="1"/>
</dbReference>